<comment type="subcellular location">
    <subcellularLocation>
        <location evidence="1">Secreted</location>
    </subcellularLocation>
</comment>
<comment type="tissue specificity">
    <text>Expressed by the venom gland.</text>
</comment>
<comment type="domain">
    <text evidence="1">The presence of a 'disulfide through disulfide knot' structurally defines this protein as a knottin.</text>
</comment>
<comment type="similarity">
    <text evidence="3">Belongs to the neurotoxin 19 (CSTX) family. 01 subfamily.</text>
</comment>
<proteinExistence type="evidence at transcript level"/>
<organism>
    <name type="scientific">Lycosa singoriensis</name>
    <name type="common">Wolf spider</name>
    <name type="synonym">Aranea singoriensis</name>
    <dbReference type="NCBI Taxonomy" id="434756"/>
    <lineage>
        <taxon>Eukaryota</taxon>
        <taxon>Metazoa</taxon>
        <taxon>Ecdysozoa</taxon>
        <taxon>Arthropoda</taxon>
        <taxon>Chelicerata</taxon>
        <taxon>Arachnida</taxon>
        <taxon>Araneae</taxon>
        <taxon>Araneomorphae</taxon>
        <taxon>Entelegynae</taxon>
        <taxon>Lycosoidea</taxon>
        <taxon>Lycosidae</taxon>
        <taxon>Lycosa</taxon>
    </lineage>
</organism>
<reference key="1">
    <citation type="journal article" date="2010" name="Zoology">
        <title>Transcriptome analysis of the venom glands of the Chinese wolf spider Lycosa singoriensis.</title>
        <authorList>
            <person name="Zhang Y."/>
            <person name="Chen J."/>
            <person name="Tang X."/>
            <person name="Wang F."/>
            <person name="Jiang L."/>
            <person name="Xiong X."/>
            <person name="Wang M."/>
            <person name="Rong M."/>
            <person name="Liu Z."/>
            <person name="Liang S."/>
        </authorList>
    </citation>
    <scope>NUCLEOTIDE SEQUENCE [LARGE SCALE MRNA]</scope>
    <source>
        <tissue>Venom gland</tissue>
    </source>
</reference>
<name>TX327_LYCSI</name>
<evidence type="ECO:0000250" key="1"/>
<evidence type="ECO:0000255" key="2"/>
<evidence type="ECO:0000305" key="3"/>
<keyword id="KW-1015">Disulfide bond</keyword>
<keyword id="KW-0960">Knottin</keyword>
<keyword id="KW-0964">Secreted</keyword>
<keyword id="KW-0732">Signal</keyword>
<keyword id="KW-0800">Toxin</keyword>
<feature type="signal peptide" evidence="2">
    <location>
        <begin position="1"/>
        <end position="20"/>
    </location>
</feature>
<feature type="propeptide" id="PRO_0000401657" evidence="1">
    <location>
        <begin position="21"/>
        <end position="44"/>
    </location>
</feature>
<feature type="chain" id="PRO_0000401658" description="U3-lycotoxin-Ls1k">
    <location>
        <begin position="45"/>
        <end position="115"/>
    </location>
</feature>
<feature type="disulfide bond" evidence="1">
    <location>
        <begin position="48"/>
        <end position="63"/>
    </location>
</feature>
<feature type="disulfide bond" evidence="1">
    <location>
        <begin position="55"/>
        <end position="72"/>
    </location>
</feature>
<feature type="disulfide bond" evidence="1">
    <location>
        <begin position="62"/>
        <end position="87"/>
    </location>
</feature>
<feature type="disulfide bond" evidence="1">
    <location>
        <begin position="74"/>
        <end position="85"/>
    </location>
</feature>
<accession>B6DCS2</accession>
<protein>
    <recommendedName>
        <fullName>U3-lycotoxin-Ls1k</fullName>
    </recommendedName>
    <alternativeName>
        <fullName>Toxin-like structure LSTX-B27</fullName>
    </alternativeName>
</protein>
<dbReference type="EMBL" id="EU926006">
    <property type="protein sequence ID" value="ACI41338.1"/>
    <property type="molecule type" value="mRNA"/>
</dbReference>
<dbReference type="EMBL" id="FM864010">
    <property type="protein sequence ID" value="CAS03608.1"/>
    <property type="molecule type" value="mRNA"/>
</dbReference>
<dbReference type="SMR" id="B6DCS2"/>
<dbReference type="ArachnoServer" id="AS000953">
    <property type="toxin name" value="U3-lycotoxin-Ls1k"/>
</dbReference>
<dbReference type="GO" id="GO:0005576">
    <property type="term" value="C:extracellular region"/>
    <property type="evidence" value="ECO:0007669"/>
    <property type="project" value="UniProtKB-SubCell"/>
</dbReference>
<dbReference type="GO" id="GO:0090729">
    <property type="term" value="F:toxin activity"/>
    <property type="evidence" value="ECO:0007669"/>
    <property type="project" value="UniProtKB-KW"/>
</dbReference>
<dbReference type="InterPro" id="IPR019553">
    <property type="entry name" value="Spider_toxin_CSTX_knottin"/>
</dbReference>
<dbReference type="InterPro" id="IPR011142">
    <property type="entry name" value="Spider_toxin_CSTX_Knottin_CS"/>
</dbReference>
<dbReference type="Pfam" id="PF10530">
    <property type="entry name" value="Toxin_35"/>
    <property type="match status" value="1"/>
</dbReference>
<dbReference type="PROSITE" id="PS60029">
    <property type="entry name" value="SPIDER_CSTX"/>
    <property type="match status" value="1"/>
</dbReference>
<sequence>MKFELLFGVLLVTLFSYSSAEMLDDFDQADEDELLSLIEKEEARAKECTPRFYDCSHDRHSCCRSELFKDVCTCFYPEGGDNEVCTCQQPKHLKYMEKAAGKAKKFGGKIKKWFG</sequence>